<protein>
    <recommendedName>
        <fullName>Auxin-responsive protein IAA2</fullName>
    </recommendedName>
    <alternativeName>
        <fullName>Indoleacetic acid-induced protein 2</fullName>
    </alternativeName>
</protein>
<dbReference type="EMBL" id="AP002743">
    <property type="protein sequence ID" value="BAA99424.1"/>
    <property type="molecule type" value="Genomic_DNA"/>
</dbReference>
<dbReference type="EMBL" id="AP008207">
    <property type="protein sequence ID" value="BAF04177.1"/>
    <property type="molecule type" value="Genomic_DNA"/>
</dbReference>
<dbReference type="EMBL" id="AP014957">
    <property type="protein sequence ID" value="BAS70815.1"/>
    <property type="molecule type" value="Genomic_DNA"/>
</dbReference>
<dbReference type="EMBL" id="CM000138">
    <property type="protein sequence ID" value="EAZ10859.1"/>
    <property type="molecule type" value="Genomic_DNA"/>
</dbReference>
<dbReference type="EMBL" id="AK100314">
    <property type="protein sequence ID" value="BAG94546.1"/>
    <property type="molecule type" value="mRNA"/>
</dbReference>
<dbReference type="RefSeq" id="XP_015622022.1">
    <property type="nucleotide sequence ID" value="XM_015766536.1"/>
</dbReference>
<dbReference type="SMR" id="Q9LG86"/>
<dbReference type="FunCoup" id="Q9LG86">
    <property type="interactions" value="764"/>
</dbReference>
<dbReference type="STRING" id="39947.Q9LG86"/>
<dbReference type="PaxDb" id="39947-Q9LG86"/>
<dbReference type="EnsemblPlants" id="Os01t0190300-01">
    <property type="protein sequence ID" value="Os01t0190300-01"/>
    <property type="gene ID" value="Os01g0190300"/>
</dbReference>
<dbReference type="Gramene" id="Os01t0190300-01">
    <property type="protein sequence ID" value="Os01t0190300-01"/>
    <property type="gene ID" value="Os01g0190300"/>
</dbReference>
<dbReference type="KEGG" id="dosa:Os01g0190300"/>
<dbReference type="eggNOG" id="ENOG502QPYY">
    <property type="taxonomic scope" value="Eukaryota"/>
</dbReference>
<dbReference type="HOGENOM" id="CLU_049393_2_2_1"/>
<dbReference type="InParanoid" id="Q9LG86"/>
<dbReference type="OMA" id="CYAIARA"/>
<dbReference type="OrthoDB" id="615826at2759"/>
<dbReference type="PlantReactome" id="R-OSA-5608118">
    <property type="pathway name" value="Auxin signalling"/>
</dbReference>
<dbReference type="Proteomes" id="UP000000763">
    <property type="component" value="Chromosome 1"/>
</dbReference>
<dbReference type="Proteomes" id="UP000007752">
    <property type="component" value="Chromosome 1"/>
</dbReference>
<dbReference type="Proteomes" id="UP000059680">
    <property type="component" value="Chromosome 1"/>
</dbReference>
<dbReference type="GO" id="GO:0005634">
    <property type="term" value="C:nucleus"/>
    <property type="evidence" value="ECO:0007669"/>
    <property type="project" value="UniProtKB-SubCell"/>
</dbReference>
<dbReference type="GO" id="GO:0009734">
    <property type="term" value="P:auxin-activated signaling pathway"/>
    <property type="evidence" value="ECO:0007669"/>
    <property type="project" value="UniProtKB-KW"/>
</dbReference>
<dbReference type="GO" id="GO:0006355">
    <property type="term" value="P:regulation of DNA-templated transcription"/>
    <property type="evidence" value="ECO:0007669"/>
    <property type="project" value="InterPro"/>
</dbReference>
<dbReference type="GO" id="GO:0009733">
    <property type="term" value="P:response to auxin"/>
    <property type="evidence" value="ECO:0000305"/>
    <property type="project" value="Gramene"/>
</dbReference>
<dbReference type="FunFam" id="3.10.20.90:FF:000225">
    <property type="entry name" value="Auxin-responsive protein"/>
    <property type="match status" value="1"/>
</dbReference>
<dbReference type="Gene3D" id="3.10.20.90">
    <property type="entry name" value="Phosphatidylinositol 3-kinase Catalytic Subunit, Chain A, domain 1"/>
    <property type="match status" value="1"/>
</dbReference>
<dbReference type="InterPro" id="IPR033389">
    <property type="entry name" value="AUX/IAA_dom"/>
</dbReference>
<dbReference type="InterPro" id="IPR003311">
    <property type="entry name" value="AUX_IAA"/>
</dbReference>
<dbReference type="InterPro" id="IPR053793">
    <property type="entry name" value="PB1-like"/>
</dbReference>
<dbReference type="PANTHER" id="PTHR31734">
    <property type="entry name" value="AUXIN-RESPONSIVE PROTEIN IAA17"/>
    <property type="match status" value="1"/>
</dbReference>
<dbReference type="PANTHER" id="PTHR31734:SF45">
    <property type="entry name" value="AUXIN-RESPONSIVE PROTEIN IAA2"/>
    <property type="match status" value="1"/>
</dbReference>
<dbReference type="Pfam" id="PF02309">
    <property type="entry name" value="AUX_IAA"/>
    <property type="match status" value="1"/>
</dbReference>
<dbReference type="SUPFAM" id="SSF54277">
    <property type="entry name" value="CAD &amp; PB1 domains"/>
    <property type="match status" value="1"/>
</dbReference>
<dbReference type="PROSITE" id="PS51745">
    <property type="entry name" value="PB1"/>
    <property type="match status" value="1"/>
</dbReference>
<name>IAA2_ORYSJ</name>
<feature type="chain" id="PRO_0000223201" description="Auxin-responsive protein IAA2">
    <location>
        <begin position="1"/>
        <end position="238"/>
    </location>
</feature>
<feature type="domain" description="PB1" evidence="2">
    <location>
        <begin position="118"/>
        <end position="216"/>
    </location>
</feature>
<feature type="region of interest" description="Disordered" evidence="3">
    <location>
        <begin position="33"/>
        <end position="69"/>
    </location>
</feature>
<feature type="region of interest" description="Disordered" evidence="3">
    <location>
        <begin position="82"/>
        <end position="114"/>
    </location>
</feature>
<feature type="region of interest" description="Disordered" evidence="3">
    <location>
        <begin position="217"/>
        <end position="238"/>
    </location>
</feature>
<feature type="short sequence motif" description="EAR-like (transcriptional repression)" evidence="1">
    <location>
        <begin position="24"/>
        <end position="28"/>
    </location>
</feature>
<feature type="compositionally biased region" description="Low complexity" evidence="3">
    <location>
        <begin position="33"/>
        <end position="44"/>
    </location>
</feature>
<feature type="compositionally biased region" description="Low complexity" evidence="3">
    <location>
        <begin position="59"/>
        <end position="69"/>
    </location>
</feature>
<feature type="compositionally biased region" description="Low complexity" evidence="3">
    <location>
        <begin position="85"/>
        <end position="94"/>
    </location>
</feature>
<feature type="compositionally biased region" description="Basic residues" evidence="3">
    <location>
        <begin position="229"/>
        <end position="238"/>
    </location>
</feature>
<comment type="function">
    <text evidence="1">Aux/IAA proteins are short-lived transcriptional factors that function as repressors of early auxin response genes at low auxin concentrations.</text>
</comment>
<comment type="subunit">
    <text evidence="1">Homodimers and heterodimers.</text>
</comment>
<comment type="subcellular location">
    <subcellularLocation>
        <location evidence="1">Nucleus</location>
    </subcellularLocation>
</comment>
<comment type="tissue specificity">
    <text evidence="4">Highly expressed in flowers.</text>
</comment>
<comment type="induction">
    <text evidence="4">By auxin.</text>
</comment>
<comment type="similarity">
    <text evidence="5">Belongs to the Aux/IAA family.</text>
</comment>
<accession>Q9LG86</accession>
<accession>Q0JQ01</accession>
<keyword id="KW-0927">Auxin signaling pathway</keyword>
<keyword id="KW-0539">Nucleus</keyword>
<keyword id="KW-1185">Reference proteome</keyword>
<keyword id="KW-0678">Repressor</keyword>
<keyword id="KW-0804">Transcription</keyword>
<keyword id="KW-0805">Transcription regulation</keyword>
<reference key="1">
    <citation type="journal article" date="2002" name="Nature">
        <title>The genome sequence and structure of rice chromosome 1.</title>
        <authorList>
            <person name="Sasaki T."/>
            <person name="Matsumoto T."/>
            <person name="Yamamoto K."/>
            <person name="Sakata K."/>
            <person name="Baba T."/>
            <person name="Katayose Y."/>
            <person name="Wu J."/>
            <person name="Niimura Y."/>
            <person name="Cheng Z."/>
            <person name="Nagamura Y."/>
            <person name="Antonio B.A."/>
            <person name="Kanamori H."/>
            <person name="Hosokawa S."/>
            <person name="Masukawa M."/>
            <person name="Arikawa K."/>
            <person name="Chiden Y."/>
            <person name="Hayashi M."/>
            <person name="Okamoto M."/>
            <person name="Ando T."/>
            <person name="Aoki H."/>
            <person name="Arita K."/>
            <person name="Hamada M."/>
            <person name="Harada C."/>
            <person name="Hijishita S."/>
            <person name="Honda M."/>
            <person name="Ichikawa Y."/>
            <person name="Idonuma A."/>
            <person name="Iijima M."/>
            <person name="Ikeda M."/>
            <person name="Ikeno M."/>
            <person name="Ito S."/>
            <person name="Ito T."/>
            <person name="Ito Y."/>
            <person name="Ito Y."/>
            <person name="Iwabuchi A."/>
            <person name="Kamiya K."/>
            <person name="Karasawa W."/>
            <person name="Katagiri S."/>
            <person name="Kikuta A."/>
            <person name="Kobayashi N."/>
            <person name="Kono I."/>
            <person name="Machita K."/>
            <person name="Maehara T."/>
            <person name="Mizuno H."/>
            <person name="Mizubayashi T."/>
            <person name="Mukai Y."/>
            <person name="Nagasaki H."/>
            <person name="Nakashima M."/>
            <person name="Nakama Y."/>
            <person name="Nakamichi Y."/>
            <person name="Nakamura M."/>
            <person name="Namiki N."/>
            <person name="Negishi M."/>
            <person name="Ohta I."/>
            <person name="Ono N."/>
            <person name="Saji S."/>
            <person name="Sakai K."/>
            <person name="Shibata M."/>
            <person name="Shimokawa T."/>
            <person name="Shomura A."/>
            <person name="Song J."/>
            <person name="Takazaki Y."/>
            <person name="Terasawa K."/>
            <person name="Tsuji K."/>
            <person name="Waki K."/>
            <person name="Yamagata H."/>
            <person name="Yamane H."/>
            <person name="Yoshiki S."/>
            <person name="Yoshihara R."/>
            <person name="Yukawa K."/>
            <person name="Zhong H."/>
            <person name="Iwama H."/>
            <person name="Endo T."/>
            <person name="Ito H."/>
            <person name="Hahn J.H."/>
            <person name="Kim H.-I."/>
            <person name="Eun M.-Y."/>
            <person name="Yano M."/>
            <person name="Jiang J."/>
            <person name="Gojobori T."/>
        </authorList>
    </citation>
    <scope>NUCLEOTIDE SEQUENCE [LARGE SCALE GENOMIC DNA]</scope>
    <source>
        <strain>cv. Nipponbare</strain>
    </source>
</reference>
<reference key="2">
    <citation type="journal article" date="2005" name="Nature">
        <title>The map-based sequence of the rice genome.</title>
        <authorList>
            <consortium name="International rice genome sequencing project (IRGSP)"/>
        </authorList>
    </citation>
    <scope>NUCLEOTIDE SEQUENCE [LARGE SCALE GENOMIC DNA]</scope>
    <source>
        <strain>cv. Nipponbare</strain>
    </source>
</reference>
<reference key="3">
    <citation type="journal article" date="2008" name="Nucleic Acids Res.">
        <title>The rice annotation project database (RAP-DB): 2008 update.</title>
        <authorList>
            <consortium name="The rice annotation project (RAP)"/>
        </authorList>
    </citation>
    <scope>GENOME REANNOTATION</scope>
    <source>
        <strain>cv. Nipponbare</strain>
    </source>
</reference>
<reference key="4">
    <citation type="journal article" date="2013" name="Rice">
        <title>Improvement of the Oryza sativa Nipponbare reference genome using next generation sequence and optical map data.</title>
        <authorList>
            <person name="Kawahara Y."/>
            <person name="de la Bastide M."/>
            <person name="Hamilton J.P."/>
            <person name="Kanamori H."/>
            <person name="McCombie W.R."/>
            <person name="Ouyang S."/>
            <person name="Schwartz D.C."/>
            <person name="Tanaka T."/>
            <person name="Wu J."/>
            <person name="Zhou S."/>
            <person name="Childs K.L."/>
            <person name="Davidson R.M."/>
            <person name="Lin H."/>
            <person name="Quesada-Ocampo L."/>
            <person name="Vaillancourt B."/>
            <person name="Sakai H."/>
            <person name="Lee S.S."/>
            <person name="Kim J."/>
            <person name="Numa H."/>
            <person name="Itoh T."/>
            <person name="Buell C.R."/>
            <person name="Matsumoto T."/>
        </authorList>
    </citation>
    <scope>GENOME REANNOTATION</scope>
    <source>
        <strain>cv. Nipponbare</strain>
    </source>
</reference>
<reference key="5">
    <citation type="journal article" date="2005" name="PLoS Biol.">
        <title>The genomes of Oryza sativa: a history of duplications.</title>
        <authorList>
            <person name="Yu J."/>
            <person name="Wang J."/>
            <person name="Lin W."/>
            <person name="Li S."/>
            <person name="Li H."/>
            <person name="Zhou J."/>
            <person name="Ni P."/>
            <person name="Dong W."/>
            <person name="Hu S."/>
            <person name="Zeng C."/>
            <person name="Zhang J."/>
            <person name="Zhang Y."/>
            <person name="Li R."/>
            <person name="Xu Z."/>
            <person name="Li S."/>
            <person name="Li X."/>
            <person name="Zheng H."/>
            <person name="Cong L."/>
            <person name="Lin L."/>
            <person name="Yin J."/>
            <person name="Geng J."/>
            <person name="Li G."/>
            <person name="Shi J."/>
            <person name="Liu J."/>
            <person name="Lv H."/>
            <person name="Li J."/>
            <person name="Wang J."/>
            <person name="Deng Y."/>
            <person name="Ran L."/>
            <person name="Shi X."/>
            <person name="Wang X."/>
            <person name="Wu Q."/>
            <person name="Li C."/>
            <person name="Ren X."/>
            <person name="Wang J."/>
            <person name="Wang X."/>
            <person name="Li D."/>
            <person name="Liu D."/>
            <person name="Zhang X."/>
            <person name="Ji Z."/>
            <person name="Zhao W."/>
            <person name="Sun Y."/>
            <person name="Zhang Z."/>
            <person name="Bao J."/>
            <person name="Han Y."/>
            <person name="Dong L."/>
            <person name="Ji J."/>
            <person name="Chen P."/>
            <person name="Wu S."/>
            <person name="Liu J."/>
            <person name="Xiao Y."/>
            <person name="Bu D."/>
            <person name="Tan J."/>
            <person name="Yang L."/>
            <person name="Ye C."/>
            <person name="Zhang J."/>
            <person name="Xu J."/>
            <person name="Zhou Y."/>
            <person name="Yu Y."/>
            <person name="Zhang B."/>
            <person name="Zhuang S."/>
            <person name="Wei H."/>
            <person name="Liu B."/>
            <person name="Lei M."/>
            <person name="Yu H."/>
            <person name="Li Y."/>
            <person name="Xu H."/>
            <person name="Wei S."/>
            <person name="He X."/>
            <person name="Fang L."/>
            <person name="Zhang Z."/>
            <person name="Zhang Y."/>
            <person name="Huang X."/>
            <person name="Su Z."/>
            <person name="Tong W."/>
            <person name="Li J."/>
            <person name="Tong Z."/>
            <person name="Li S."/>
            <person name="Ye J."/>
            <person name="Wang L."/>
            <person name="Fang L."/>
            <person name="Lei T."/>
            <person name="Chen C.-S."/>
            <person name="Chen H.-C."/>
            <person name="Xu Z."/>
            <person name="Li H."/>
            <person name="Huang H."/>
            <person name="Zhang F."/>
            <person name="Xu H."/>
            <person name="Li N."/>
            <person name="Zhao C."/>
            <person name="Li S."/>
            <person name="Dong L."/>
            <person name="Huang Y."/>
            <person name="Li L."/>
            <person name="Xi Y."/>
            <person name="Qi Q."/>
            <person name="Li W."/>
            <person name="Zhang B."/>
            <person name="Hu W."/>
            <person name="Zhang Y."/>
            <person name="Tian X."/>
            <person name="Jiao Y."/>
            <person name="Liang X."/>
            <person name="Jin J."/>
            <person name="Gao L."/>
            <person name="Zheng W."/>
            <person name="Hao B."/>
            <person name="Liu S.-M."/>
            <person name="Wang W."/>
            <person name="Yuan L."/>
            <person name="Cao M."/>
            <person name="McDermott J."/>
            <person name="Samudrala R."/>
            <person name="Wang J."/>
            <person name="Wong G.K.-S."/>
            <person name="Yang H."/>
        </authorList>
    </citation>
    <scope>NUCLEOTIDE SEQUENCE [LARGE SCALE GENOMIC DNA]</scope>
    <source>
        <strain>cv. Nipponbare</strain>
    </source>
</reference>
<reference key="6">
    <citation type="journal article" date="2003" name="Science">
        <title>Collection, mapping, and annotation of over 28,000 cDNA clones from japonica rice.</title>
        <authorList>
            <consortium name="The rice full-length cDNA consortium"/>
        </authorList>
    </citation>
    <scope>NUCLEOTIDE SEQUENCE [LARGE SCALE MRNA]</scope>
    <source>
        <strain>cv. Nipponbare</strain>
    </source>
</reference>
<reference key="7">
    <citation type="journal article" date="2006" name="Funct. Integr. Genomics">
        <title>Structure and expression analysis of early auxin-responsive Aux/IAA gene family in rice (Oryza sativa).</title>
        <authorList>
            <person name="Jain M."/>
            <person name="Kaur N."/>
            <person name="Garg R."/>
            <person name="Thakur J.K."/>
            <person name="Tyagi A.K."/>
            <person name="Khurana J.P."/>
        </authorList>
    </citation>
    <scope>TISSUE SPECIFICITY</scope>
    <scope>INDUCTION</scope>
    <scope>NOMENCLATURE</scope>
</reference>
<proteinExistence type="evidence at transcript level"/>
<evidence type="ECO:0000250" key="1"/>
<evidence type="ECO:0000255" key="2">
    <source>
        <dbReference type="PROSITE-ProRule" id="PRU01081"/>
    </source>
</evidence>
<evidence type="ECO:0000256" key="3">
    <source>
        <dbReference type="SAM" id="MobiDB-lite"/>
    </source>
</evidence>
<evidence type="ECO:0000269" key="4">
    <source>
    </source>
</evidence>
<evidence type="ECO:0000305" key="5"/>
<evidence type="ECO:0000312" key="6">
    <source>
        <dbReference type="EMBL" id="EAZ10859.1"/>
    </source>
</evidence>
<sequence>MAWRRGFGREEEDAAAAGESGLELCLGLPAYFSSSSSSKPSEGSTAAPAFALRSNGTNASKPSGAAAAAPVVGWPPVRSFRRNLASSSSSSSKQAPPPPSSSPQNGDKASKDGGAEKGMFVKINMDGVPIGRKVDLAAYGGYAQLSAAVDKLFRGLLAAQSAAADGEADAAAAGEMVGGGEYTLVYEDDEGDRMLVGDVPWQMFIATAKRLRVLKSSDLPPPSLMRAAGSRKRAAADS</sequence>
<organism>
    <name type="scientific">Oryza sativa subsp. japonica</name>
    <name type="common">Rice</name>
    <dbReference type="NCBI Taxonomy" id="39947"/>
    <lineage>
        <taxon>Eukaryota</taxon>
        <taxon>Viridiplantae</taxon>
        <taxon>Streptophyta</taxon>
        <taxon>Embryophyta</taxon>
        <taxon>Tracheophyta</taxon>
        <taxon>Spermatophyta</taxon>
        <taxon>Magnoliopsida</taxon>
        <taxon>Liliopsida</taxon>
        <taxon>Poales</taxon>
        <taxon>Poaceae</taxon>
        <taxon>BOP clade</taxon>
        <taxon>Oryzoideae</taxon>
        <taxon>Oryzeae</taxon>
        <taxon>Oryzinae</taxon>
        <taxon>Oryza</taxon>
        <taxon>Oryza sativa</taxon>
    </lineage>
</organism>
<gene>
    <name type="primary">IAA2</name>
    <name type="ordered locus">Os01g0190300</name>
    <name type="ordered locus">LOC_Os01g09450</name>
    <name evidence="6" type="ORF">OsJ_00698</name>
    <name type="ORF">P0710E05.18</name>
</gene>